<protein>
    <recommendedName>
        <fullName evidence="1">Glucokinase</fullName>
        <ecNumber evidence="1">2.7.1.2</ecNumber>
    </recommendedName>
    <alternativeName>
        <fullName evidence="1">Glucose kinase</fullName>
    </alternativeName>
</protein>
<sequence length="342" mass="37064">MTLLLAGDIGGTKTILRLVEISNSSELHNIYEESYQSGDFPDLVPMVQQFLVKANIPSHPEKACFAIAGPVVNNTAKLTNLVWFLDTERLAQELSIPFISLINDFAAVGYGIFGLNKQDLLTLQAGKHQPEAPIAIIGAGTGLGQGFLIKQGNQYQVFPSEGGHADFAPRNELEFQLLKYLLDKHDIQRVSVERVVSGQGIVAIYQFLRDRKLATESPEIAQVVRTWEQQAGQAEKTVDPGAAIGKAAVQGSDRLSEQALQLFIDAYGAEAGNLALKLLPYGGLYIAGGIAPKILPLIENSNFLLNFSQKGRMRPLLAEIPVHIILNQQVGLIGAALCAARL</sequence>
<comment type="catalytic activity">
    <reaction evidence="1">
        <text>D-glucose + ATP = D-glucose 6-phosphate + ADP + H(+)</text>
        <dbReference type="Rhea" id="RHEA:17825"/>
        <dbReference type="ChEBI" id="CHEBI:4167"/>
        <dbReference type="ChEBI" id="CHEBI:15378"/>
        <dbReference type="ChEBI" id="CHEBI:30616"/>
        <dbReference type="ChEBI" id="CHEBI:61548"/>
        <dbReference type="ChEBI" id="CHEBI:456216"/>
        <dbReference type="EC" id="2.7.1.2"/>
    </reaction>
</comment>
<comment type="subcellular location">
    <subcellularLocation>
        <location evidence="1">Cytoplasm</location>
    </subcellularLocation>
</comment>
<comment type="similarity">
    <text evidence="1">Belongs to the bacterial glucokinase family.</text>
</comment>
<accession>P58616</accession>
<gene>
    <name evidence="1" type="primary">glk</name>
    <name type="ordered locus">alr2973</name>
</gene>
<name>GLK_NOSS1</name>
<keyword id="KW-0067">ATP-binding</keyword>
<keyword id="KW-0963">Cytoplasm</keyword>
<keyword id="KW-0324">Glycolysis</keyword>
<keyword id="KW-0418">Kinase</keyword>
<keyword id="KW-0547">Nucleotide-binding</keyword>
<keyword id="KW-1185">Reference proteome</keyword>
<keyword id="KW-0808">Transferase</keyword>
<reference key="1">
    <citation type="journal article" date="2001" name="DNA Res.">
        <title>Complete genomic sequence of the filamentous nitrogen-fixing cyanobacterium Anabaena sp. strain PCC 7120.</title>
        <authorList>
            <person name="Kaneko T."/>
            <person name="Nakamura Y."/>
            <person name="Wolk C.P."/>
            <person name="Kuritz T."/>
            <person name="Sasamoto S."/>
            <person name="Watanabe A."/>
            <person name="Iriguchi M."/>
            <person name="Ishikawa A."/>
            <person name="Kawashima K."/>
            <person name="Kimura T."/>
            <person name="Kishida Y."/>
            <person name="Kohara M."/>
            <person name="Matsumoto M."/>
            <person name="Matsuno A."/>
            <person name="Muraki A."/>
            <person name="Nakazaki N."/>
            <person name="Shimpo S."/>
            <person name="Sugimoto M."/>
            <person name="Takazawa M."/>
            <person name="Yamada M."/>
            <person name="Yasuda M."/>
            <person name="Tabata S."/>
        </authorList>
    </citation>
    <scope>NUCLEOTIDE SEQUENCE [LARGE SCALE GENOMIC DNA]</scope>
    <source>
        <strain>PCC 7120 / SAG 25.82 / UTEX 2576</strain>
    </source>
</reference>
<organism>
    <name type="scientific">Nostoc sp. (strain PCC 7120 / SAG 25.82 / UTEX 2576)</name>
    <dbReference type="NCBI Taxonomy" id="103690"/>
    <lineage>
        <taxon>Bacteria</taxon>
        <taxon>Bacillati</taxon>
        <taxon>Cyanobacteriota</taxon>
        <taxon>Cyanophyceae</taxon>
        <taxon>Nostocales</taxon>
        <taxon>Nostocaceae</taxon>
        <taxon>Nostoc</taxon>
    </lineage>
</organism>
<evidence type="ECO:0000255" key="1">
    <source>
        <dbReference type="HAMAP-Rule" id="MF_00524"/>
    </source>
</evidence>
<feature type="chain" id="PRO_0000215119" description="Glucokinase">
    <location>
        <begin position="1"/>
        <end position="342"/>
    </location>
</feature>
<feature type="binding site" evidence="1">
    <location>
        <begin position="7"/>
        <end position="12"/>
    </location>
    <ligand>
        <name>ATP</name>
        <dbReference type="ChEBI" id="CHEBI:30616"/>
    </ligand>
</feature>
<dbReference type="EC" id="2.7.1.2" evidence="1"/>
<dbReference type="EMBL" id="BA000019">
    <property type="protein sequence ID" value="BAB74672.1"/>
    <property type="molecule type" value="Genomic_DNA"/>
</dbReference>
<dbReference type="PIR" id="AF2177">
    <property type="entry name" value="AF2177"/>
</dbReference>
<dbReference type="RefSeq" id="WP_010997124.1">
    <property type="nucleotide sequence ID" value="NZ_RSCN01000003.1"/>
</dbReference>
<dbReference type="SMR" id="P58616"/>
<dbReference type="STRING" id="103690.gene:10495009"/>
<dbReference type="KEGG" id="ana:alr2973"/>
<dbReference type="eggNOG" id="COG0837">
    <property type="taxonomic scope" value="Bacteria"/>
</dbReference>
<dbReference type="OrthoDB" id="9800595at2"/>
<dbReference type="Proteomes" id="UP000002483">
    <property type="component" value="Chromosome"/>
</dbReference>
<dbReference type="GO" id="GO:0005737">
    <property type="term" value="C:cytoplasm"/>
    <property type="evidence" value="ECO:0007669"/>
    <property type="project" value="UniProtKB-SubCell"/>
</dbReference>
<dbReference type="GO" id="GO:0005524">
    <property type="term" value="F:ATP binding"/>
    <property type="evidence" value="ECO:0007669"/>
    <property type="project" value="UniProtKB-UniRule"/>
</dbReference>
<dbReference type="GO" id="GO:0005536">
    <property type="term" value="F:D-glucose binding"/>
    <property type="evidence" value="ECO:0007669"/>
    <property type="project" value="InterPro"/>
</dbReference>
<dbReference type="GO" id="GO:0004340">
    <property type="term" value="F:glucokinase activity"/>
    <property type="evidence" value="ECO:0007669"/>
    <property type="project" value="UniProtKB-UniRule"/>
</dbReference>
<dbReference type="GO" id="GO:0006096">
    <property type="term" value="P:glycolytic process"/>
    <property type="evidence" value="ECO:0007669"/>
    <property type="project" value="UniProtKB-UniRule"/>
</dbReference>
<dbReference type="CDD" id="cd24008">
    <property type="entry name" value="ASKHA_NBD_GLK"/>
    <property type="match status" value="1"/>
</dbReference>
<dbReference type="Gene3D" id="3.30.420.40">
    <property type="match status" value="1"/>
</dbReference>
<dbReference type="Gene3D" id="3.40.367.20">
    <property type="match status" value="1"/>
</dbReference>
<dbReference type="HAMAP" id="MF_00524">
    <property type="entry name" value="Glucokinase"/>
    <property type="match status" value="1"/>
</dbReference>
<dbReference type="InterPro" id="IPR043129">
    <property type="entry name" value="ATPase_NBD"/>
</dbReference>
<dbReference type="InterPro" id="IPR003836">
    <property type="entry name" value="Glucokinase"/>
</dbReference>
<dbReference type="NCBIfam" id="TIGR00749">
    <property type="entry name" value="glk"/>
    <property type="match status" value="1"/>
</dbReference>
<dbReference type="NCBIfam" id="NF001415">
    <property type="entry name" value="PRK00292.1-2"/>
    <property type="match status" value="1"/>
</dbReference>
<dbReference type="PANTHER" id="PTHR47363">
    <property type="entry name" value="GLUCOKINASE"/>
    <property type="match status" value="1"/>
</dbReference>
<dbReference type="PANTHER" id="PTHR47363:SF1">
    <property type="entry name" value="GLUCOKINASE"/>
    <property type="match status" value="1"/>
</dbReference>
<dbReference type="Pfam" id="PF02685">
    <property type="entry name" value="Glucokinase"/>
    <property type="match status" value="1"/>
</dbReference>
<dbReference type="SUPFAM" id="SSF53067">
    <property type="entry name" value="Actin-like ATPase domain"/>
    <property type="match status" value="1"/>
</dbReference>
<proteinExistence type="inferred from homology"/>